<protein>
    <recommendedName>
        <fullName evidence="1">Queuine tRNA-ribosyltransferase</fullName>
        <ecNumber evidence="1">2.4.2.29</ecNumber>
    </recommendedName>
    <alternativeName>
        <fullName evidence="1">Guanine insertion enzyme</fullName>
    </alternativeName>
    <alternativeName>
        <fullName evidence="1">tRNA-guanine transglycosylase</fullName>
    </alternativeName>
</protein>
<feature type="chain" id="PRO_1000016767" description="Queuine tRNA-ribosyltransferase">
    <location>
        <begin position="1"/>
        <end position="376"/>
    </location>
</feature>
<feature type="region of interest" description="RNA binding" evidence="1">
    <location>
        <begin position="251"/>
        <end position="257"/>
    </location>
</feature>
<feature type="region of interest" description="RNA binding; important for wobble base 34 recognition" evidence="1">
    <location>
        <begin position="275"/>
        <end position="279"/>
    </location>
</feature>
<feature type="active site" description="Proton acceptor" evidence="1">
    <location>
        <position position="90"/>
    </location>
</feature>
<feature type="active site" description="Nucleophile" evidence="1">
    <location>
        <position position="270"/>
    </location>
</feature>
<feature type="binding site" evidence="1">
    <location>
        <begin position="90"/>
        <end position="94"/>
    </location>
    <ligand>
        <name>substrate</name>
    </ligand>
</feature>
<feature type="binding site" evidence="1">
    <location>
        <position position="144"/>
    </location>
    <ligand>
        <name>substrate</name>
    </ligand>
</feature>
<feature type="binding site" evidence="1">
    <location>
        <position position="193"/>
    </location>
    <ligand>
        <name>substrate</name>
    </ligand>
</feature>
<feature type="binding site" evidence="1">
    <location>
        <position position="220"/>
    </location>
    <ligand>
        <name>substrate</name>
    </ligand>
</feature>
<feature type="binding site" evidence="1">
    <location>
        <position position="308"/>
    </location>
    <ligand>
        <name>Zn(2+)</name>
        <dbReference type="ChEBI" id="CHEBI:29105"/>
    </ligand>
</feature>
<feature type="binding site" evidence="1">
    <location>
        <position position="310"/>
    </location>
    <ligand>
        <name>Zn(2+)</name>
        <dbReference type="ChEBI" id="CHEBI:29105"/>
    </ligand>
</feature>
<feature type="binding site" evidence="1">
    <location>
        <position position="313"/>
    </location>
    <ligand>
        <name>Zn(2+)</name>
        <dbReference type="ChEBI" id="CHEBI:29105"/>
    </ligand>
</feature>
<feature type="binding site" evidence="1">
    <location>
        <position position="339"/>
    </location>
    <ligand>
        <name>Zn(2+)</name>
        <dbReference type="ChEBI" id="CHEBI:29105"/>
    </ligand>
</feature>
<sequence>MKFEVIKKDGNARRGILTTAHSVIQTPVFMPVGTVGAVKSLDAFDMSEILDAKIILANTYHMYLRPGSKVVREFGGLHGFSKFDRSFLTDSGGFQAFSLRSNTKNDDGGIKFKSHIDGSTHYFTPRSVLDTQYELGSDIMMILDDLVALPAEPKRIDLSIKRTIKWAKEAIDYHKFMQSKGVGLQQNIFGIVQGGTDYEARKFCAEALNEMPFDGLAIGGLSVGESNEAMYDTVEAVMPFMDELRPRYLMGVGTPEDLVENVERGVDMFDCVMPTRNARNGTLFTSFGKINIKSAKFINDHAPIDPQCQCYTCKRYSRGYLNHLFKARELTFFRLASLHNLHYYLNLMKEMREAIEVGEFAKFKRNFYAKRSTDEL</sequence>
<organism>
    <name type="scientific">Campylobacter concisus (strain 13826)</name>
    <dbReference type="NCBI Taxonomy" id="360104"/>
    <lineage>
        <taxon>Bacteria</taxon>
        <taxon>Pseudomonadati</taxon>
        <taxon>Campylobacterota</taxon>
        <taxon>Epsilonproteobacteria</taxon>
        <taxon>Campylobacterales</taxon>
        <taxon>Campylobacteraceae</taxon>
        <taxon>Campylobacter</taxon>
    </lineage>
</organism>
<keyword id="KW-0328">Glycosyltransferase</keyword>
<keyword id="KW-0479">Metal-binding</keyword>
<keyword id="KW-0671">Queuosine biosynthesis</keyword>
<keyword id="KW-0808">Transferase</keyword>
<keyword id="KW-0819">tRNA processing</keyword>
<keyword id="KW-0862">Zinc</keyword>
<name>TGT_CAMC1</name>
<dbReference type="EC" id="2.4.2.29" evidence="1"/>
<dbReference type="EMBL" id="CP000792">
    <property type="protein sequence ID" value="EAT97330.1"/>
    <property type="molecule type" value="Genomic_DNA"/>
</dbReference>
<dbReference type="RefSeq" id="WP_012001685.1">
    <property type="nucleotide sequence ID" value="NC_009802.2"/>
</dbReference>
<dbReference type="SMR" id="A7ZD89"/>
<dbReference type="STRING" id="360104.CCC13826_0093"/>
<dbReference type="KEGG" id="cco:CCC13826_0093"/>
<dbReference type="eggNOG" id="COG0343">
    <property type="taxonomic scope" value="Bacteria"/>
</dbReference>
<dbReference type="HOGENOM" id="CLU_022060_0_1_7"/>
<dbReference type="OrthoDB" id="9805417at2"/>
<dbReference type="UniPathway" id="UPA00392"/>
<dbReference type="Proteomes" id="UP000001121">
    <property type="component" value="Chromosome"/>
</dbReference>
<dbReference type="GO" id="GO:0005829">
    <property type="term" value="C:cytosol"/>
    <property type="evidence" value="ECO:0007669"/>
    <property type="project" value="TreeGrafter"/>
</dbReference>
<dbReference type="GO" id="GO:0046872">
    <property type="term" value="F:metal ion binding"/>
    <property type="evidence" value="ECO:0007669"/>
    <property type="project" value="UniProtKB-KW"/>
</dbReference>
<dbReference type="GO" id="GO:0008479">
    <property type="term" value="F:tRNA-guanosine(34) queuine transglycosylase activity"/>
    <property type="evidence" value="ECO:0007669"/>
    <property type="project" value="UniProtKB-UniRule"/>
</dbReference>
<dbReference type="GO" id="GO:0008616">
    <property type="term" value="P:queuosine biosynthetic process"/>
    <property type="evidence" value="ECO:0007669"/>
    <property type="project" value="UniProtKB-UniRule"/>
</dbReference>
<dbReference type="GO" id="GO:0002099">
    <property type="term" value="P:tRNA wobble guanine modification"/>
    <property type="evidence" value="ECO:0007669"/>
    <property type="project" value="TreeGrafter"/>
</dbReference>
<dbReference type="GO" id="GO:0101030">
    <property type="term" value="P:tRNA-guanine transglycosylation"/>
    <property type="evidence" value="ECO:0007669"/>
    <property type="project" value="InterPro"/>
</dbReference>
<dbReference type="Gene3D" id="3.20.20.105">
    <property type="entry name" value="Queuine tRNA-ribosyltransferase-like"/>
    <property type="match status" value="1"/>
</dbReference>
<dbReference type="HAMAP" id="MF_00168">
    <property type="entry name" value="Q_tRNA_Tgt"/>
    <property type="match status" value="1"/>
</dbReference>
<dbReference type="InterPro" id="IPR050076">
    <property type="entry name" value="ArchSynthase1/Queuine_TRR"/>
</dbReference>
<dbReference type="InterPro" id="IPR004803">
    <property type="entry name" value="TGT"/>
</dbReference>
<dbReference type="InterPro" id="IPR036511">
    <property type="entry name" value="TGT-like_sf"/>
</dbReference>
<dbReference type="InterPro" id="IPR002616">
    <property type="entry name" value="tRNA_ribo_trans-like"/>
</dbReference>
<dbReference type="NCBIfam" id="TIGR00430">
    <property type="entry name" value="Q_tRNA_tgt"/>
    <property type="match status" value="1"/>
</dbReference>
<dbReference type="NCBIfam" id="TIGR00449">
    <property type="entry name" value="tgt_general"/>
    <property type="match status" value="1"/>
</dbReference>
<dbReference type="PANTHER" id="PTHR46499">
    <property type="entry name" value="QUEUINE TRNA-RIBOSYLTRANSFERASE"/>
    <property type="match status" value="1"/>
</dbReference>
<dbReference type="PANTHER" id="PTHR46499:SF1">
    <property type="entry name" value="QUEUINE TRNA-RIBOSYLTRANSFERASE"/>
    <property type="match status" value="1"/>
</dbReference>
<dbReference type="Pfam" id="PF01702">
    <property type="entry name" value="TGT"/>
    <property type="match status" value="1"/>
</dbReference>
<dbReference type="SUPFAM" id="SSF51713">
    <property type="entry name" value="tRNA-guanine transglycosylase"/>
    <property type="match status" value="1"/>
</dbReference>
<comment type="function">
    <text evidence="1">Catalyzes the base-exchange of a guanine (G) residue with the queuine precursor 7-aminomethyl-7-deazaguanine (PreQ1) at position 34 (anticodon wobble position) in tRNAs with GU(N) anticodons (tRNA-Asp, -Asn, -His and -Tyr). Catalysis occurs through a double-displacement mechanism. The nucleophile active site attacks the C1' of nucleotide 34 to detach the guanine base from the RNA, forming a covalent enzyme-RNA intermediate. The proton acceptor active site deprotonates the incoming PreQ1, allowing a nucleophilic attack on the C1' of the ribose to form the product. After dissociation, two additional enzymatic reactions on the tRNA convert PreQ1 to queuine (Q), resulting in the hypermodified nucleoside queuosine (7-(((4,5-cis-dihydroxy-2-cyclopenten-1-yl)amino)methyl)-7-deazaguanosine).</text>
</comment>
<comment type="catalytic activity">
    <reaction evidence="1">
        <text>7-aminomethyl-7-carbaguanine + guanosine(34) in tRNA = 7-aminomethyl-7-carbaguanosine(34) in tRNA + guanine</text>
        <dbReference type="Rhea" id="RHEA:24104"/>
        <dbReference type="Rhea" id="RHEA-COMP:10341"/>
        <dbReference type="Rhea" id="RHEA-COMP:10342"/>
        <dbReference type="ChEBI" id="CHEBI:16235"/>
        <dbReference type="ChEBI" id="CHEBI:58703"/>
        <dbReference type="ChEBI" id="CHEBI:74269"/>
        <dbReference type="ChEBI" id="CHEBI:82833"/>
        <dbReference type="EC" id="2.4.2.29"/>
    </reaction>
</comment>
<comment type="cofactor">
    <cofactor evidence="1">
        <name>Zn(2+)</name>
        <dbReference type="ChEBI" id="CHEBI:29105"/>
    </cofactor>
    <text evidence="1">Binds 1 zinc ion per subunit.</text>
</comment>
<comment type="pathway">
    <text evidence="1">tRNA modification; tRNA-queuosine biosynthesis.</text>
</comment>
<comment type="subunit">
    <text evidence="1">Homodimer. Within each dimer, one monomer is responsible for RNA recognition and catalysis, while the other monomer binds to the replacement base PreQ1.</text>
</comment>
<comment type="similarity">
    <text evidence="1">Belongs to the queuine tRNA-ribosyltransferase family.</text>
</comment>
<reference key="1">
    <citation type="submission" date="2007-10" db="EMBL/GenBank/DDBJ databases">
        <title>Genome sequence of Campylobacter concisus 13826 isolated from human feces.</title>
        <authorList>
            <person name="Fouts D.E."/>
            <person name="Mongodin E.F."/>
            <person name="Puiu D."/>
            <person name="Sebastian Y."/>
            <person name="Miller W.G."/>
            <person name="Mandrell R.E."/>
            <person name="On S."/>
            <person name="Nelson K.E."/>
        </authorList>
    </citation>
    <scope>NUCLEOTIDE SEQUENCE [LARGE SCALE GENOMIC DNA]</scope>
    <source>
        <strain>13826</strain>
    </source>
</reference>
<accession>A7ZD89</accession>
<proteinExistence type="inferred from homology"/>
<gene>
    <name evidence="1" type="primary">tgt</name>
    <name type="ordered locus">Ccon26_08790</name>
    <name type="ORF">CCC13826_0093</name>
</gene>
<evidence type="ECO:0000255" key="1">
    <source>
        <dbReference type="HAMAP-Rule" id="MF_00168"/>
    </source>
</evidence>